<keyword id="KW-0963">Cytoplasm</keyword>
<keyword id="KW-0448">Lipopolysaccharide biosynthesis</keyword>
<keyword id="KW-0548">Nucleotidyltransferase</keyword>
<keyword id="KW-1185">Reference proteome</keyword>
<keyword id="KW-0808">Transferase</keyword>
<gene>
    <name evidence="1" type="primary">kdsB</name>
    <name type="ordered locus">BP2768</name>
</gene>
<proteinExistence type="inferred from homology"/>
<organism>
    <name type="scientific">Bordetella pertussis (strain Tohama I / ATCC BAA-589 / NCTC 13251)</name>
    <dbReference type="NCBI Taxonomy" id="257313"/>
    <lineage>
        <taxon>Bacteria</taxon>
        <taxon>Pseudomonadati</taxon>
        <taxon>Pseudomonadota</taxon>
        <taxon>Betaproteobacteria</taxon>
        <taxon>Burkholderiales</taxon>
        <taxon>Alcaligenaceae</taxon>
        <taxon>Bordetella</taxon>
    </lineage>
</organism>
<feature type="chain" id="PRO_1000091862" description="3-deoxy-manno-octulosonate cytidylyltransferase">
    <location>
        <begin position="1"/>
        <end position="254"/>
    </location>
</feature>
<comment type="function">
    <text evidence="1">Activates KDO (a required 8-carbon sugar) for incorporation into bacterial lipopolysaccharide in Gram-negative bacteria.</text>
</comment>
<comment type="catalytic activity">
    <reaction evidence="1">
        <text>3-deoxy-alpha-D-manno-oct-2-ulosonate + CTP = CMP-3-deoxy-beta-D-manno-octulosonate + diphosphate</text>
        <dbReference type="Rhea" id="RHEA:23448"/>
        <dbReference type="ChEBI" id="CHEBI:33019"/>
        <dbReference type="ChEBI" id="CHEBI:37563"/>
        <dbReference type="ChEBI" id="CHEBI:85986"/>
        <dbReference type="ChEBI" id="CHEBI:85987"/>
        <dbReference type="EC" id="2.7.7.38"/>
    </reaction>
</comment>
<comment type="pathway">
    <text evidence="1">Nucleotide-sugar biosynthesis; CMP-3-deoxy-D-manno-octulosonate biosynthesis; CMP-3-deoxy-D-manno-octulosonate from 3-deoxy-D-manno-octulosonate and CTP: step 1/1.</text>
</comment>
<comment type="pathway">
    <text evidence="1">Bacterial outer membrane biogenesis; lipopolysaccharide biosynthesis.</text>
</comment>
<comment type="subcellular location">
    <subcellularLocation>
        <location evidence="1">Cytoplasm</location>
    </subcellularLocation>
</comment>
<comment type="similarity">
    <text evidence="1">Belongs to the KdsB family.</text>
</comment>
<name>KDSB_BORPE</name>
<dbReference type="EC" id="2.7.7.38" evidence="1"/>
<dbReference type="EMBL" id="BX640419">
    <property type="protein sequence ID" value="CAE43043.1"/>
    <property type="molecule type" value="Genomic_DNA"/>
</dbReference>
<dbReference type="RefSeq" id="NP_881372.1">
    <property type="nucleotide sequence ID" value="NC_002929.2"/>
</dbReference>
<dbReference type="RefSeq" id="WP_010931124.1">
    <property type="nucleotide sequence ID" value="NZ_CP039022.1"/>
</dbReference>
<dbReference type="SMR" id="Q7VVB0"/>
<dbReference type="STRING" id="257313.BP2768"/>
<dbReference type="PaxDb" id="257313-BP2768"/>
<dbReference type="GeneID" id="69602669"/>
<dbReference type="KEGG" id="bpe:BP2768"/>
<dbReference type="PATRIC" id="fig|257313.5.peg.2986"/>
<dbReference type="eggNOG" id="COG1212">
    <property type="taxonomic scope" value="Bacteria"/>
</dbReference>
<dbReference type="HOGENOM" id="CLU_065038_1_0_4"/>
<dbReference type="UniPathway" id="UPA00030"/>
<dbReference type="UniPathway" id="UPA00358">
    <property type="reaction ID" value="UER00476"/>
</dbReference>
<dbReference type="Proteomes" id="UP000002676">
    <property type="component" value="Chromosome"/>
</dbReference>
<dbReference type="GO" id="GO:0005829">
    <property type="term" value="C:cytosol"/>
    <property type="evidence" value="ECO:0007669"/>
    <property type="project" value="TreeGrafter"/>
</dbReference>
<dbReference type="GO" id="GO:0008690">
    <property type="term" value="F:3-deoxy-manno-octulosonate cytidylyltransferase activity"/>
    <property type="evidence" value="ECO:0007669"/>
    <property type="project" value="UniProtKB-UniRule"/>
</dbReference>
<dbReference type="GO" id="GO:0033468">
    <property type="term" value="P:CMP-keto-3-deoxy-D-manno-octulosonic acid biosynthetic process"/>
    <property type="evidence" value="ECO:0007669"/>
    <property type="project" value="UniProtKB-UniRule"/>
</dbReference>
<dbReference type="GO" id="GO:0009103">
    <property type="term" value="P:lipopolysaccharide biosynthetic process"/>
    <property type="evidence" value="ECO:0007669"/>
    <property type="project" value="UniProtKB-UniRule"/>
</dbReference>
<dbReference type="CDD" id="cd02517">
    <property type="entry name" value="CMP-KDO-Synthetase"/>
    <property type="match status" value="1"/>
</dbReference>
<dbReference type="FunFam" id="3.90.550.10:FF:000011">
    <property type="entry name" value="3-deoxy-manno-octulosonate cytidylyltransferase"/>
    <property type="match status" value="1"/>
</dbReference>
<dbReference type="Gene3D" id="3.90.550.10">
    <property type="entry name" value="Spore Coat Polysaccharide Biosynthesis Protein SpsA, Chain A"/>
    <property type="match status" value="1"/>
</dbReference>
<dbReference type="HAMAP" id="MF_00057">
    <property type="entry name" value="KdsB"/>
    <property type="match status" value="1"/>
</dbReference>
<dbReference type="InterPro" id="IPR003329">
    <property type="entry name" value="Cytidylyl_trans"/>
</dbReference>
<dbReference type="InterPro" id="IPR004528">
    <property type="entry name" value="KdsB"/>
</dbReference>
<dbReference type="InterPro" id="IPR029044">
    <property type="entry name" value="Nucleotide-diphossugar_trans"/>
</dbReference>
<dbReference type="NCBIfam" id="TIGR00466">
    <property type="entry name" value="kdsB"/>
    <property type="match status" value="1"/>
</dbReference>
<dbReference type="NCBIfam" id="NF003950">
    <property type="entry name" value="PRK05450.1-3"/>
    <property type="match status" value="1"/>
</dbReference>
<dbReference type="NCBIfam" id="NF003952">
    <property type="entry name" value="PRK05450.1-5"/>
    <property type="match status" value="1"/>
</dbReference>
<dbReference type="NCBIfam" id="NF009905">
    <property type="entry name" value="PRK13368.1"/>
    <property type="match status" value="1"/>
</dbReference>
<dbReference type="PANTHER" id="PTHR42866">
    <property type="entry name" value="3-DEOXY-MANNO-OCTULOSONATE CYTIDYLYLTRANSFERASE"/>
    <property type="match status" value="1"/>
</dbReference>
<dbReference type="PANTHER" id="PTHR42866:SF2">
    <property type="entry name" value="3-DEOXY-MANNO-OCTULOSONATE CYTIDYLYLTRANSFERASE, MITOCHONDRIAL"/>
    <property type="match status" value="1"/>
</dbReference>
<dbReference type="Pfam" id="PF02348">
    <property type="entry name" value="CTP_transf_3"/>
    <property type="match status" value="1"/>
</dbReference>
<dbReference type="SUPFAM" id="SSF53448">
    <property type="entry name" value="Nucleotide-diphospho-sugar transferases"/>
    <property type="match status" value="1"/>
</dbReference>
<accession>Q7VVB0</accession>
<reference key="1">
    <citation type="journal article" date="2003" name="Nat. Genet.">
        <title>Comparative analysis of the genome sequences of Bordetella pertussis, Bordetella parapertussis and Bordetella bronchiseptica.</title>
        <authorList>
            <person name="Parkhill J."/>
            <person name="Sebaihia M."/>
            <person name="Preston A."/>
            <person name="Murphy L.D."/>
            <person name="Thomson N.R."/>
            <person name="Harris D.E."/>
            <person name="Holden M.T.G."/>
            <person name="Churcher C.M."/>
            <person name="Bentley S.D."/>
            <person name="Mungall K.L."/>
            <person name="Cerdeno-Tarraga A.-M."/>
            <person name="Temple L."/>
            <person name="James K.D."/>
            <person name="Harris B."/>
            <person name="Quail M.A."/>
            <person name="Achtman M."/>
            <person name="Atkin R."/>
            <person name="Baker S."/>
            <person name="Basham D."/>
            <person name="Bason N."/>
            <person name="Cherevach I."/>
            <person name="Chillingworth T."/>
            <person name="Collins M."/>
            <person name="Cronin A."/>
            <person name="Davis P."/>
            <person name="Doggett J."/>
            <person name="Feltwell T."/>
            <person name="Goble A."/>
            <person name="Hamlin N."/>
            <person name="Hauser H."/>
            <person name="Holroyd S."/>
            <person name="Jagels K."/>
            <person name="Leather S."/>
            <person name="Moule S."/>
            <person name="Norberczak H."/>
            <person name="O'Neil S."/>
            <person name="Ormond D."/>
            <person name="Price C."/>
            <person name="Rabbinowitsch E."/>
            <person name="Rutter S."/>
            <person name="Sanders M."/>
            <person name="Saunders D."/>
            <person name="Seeger K."/>
            <person name="Sharp S."/>
            <person name="Simmonds M."/>
            <person name="Skelton J."/>
            <person name="Squares R."/>
            <person name="Squares S."/>
            <person name="Stevens K."/>
            <person name="Unwin L."/>
            <person name="Whitehead S."/>
            <person name="Barrell B.G."/>
            <person name="Maskell D.J."/>
        </authorList>
    </citation>
    <scope>NUCLEOTIDE SEQUENCE [LARGE SCALE GENOMIC DNA]</scope>
    <source>
        <strain>Tohama I / ATCC BAA-589 / NCTC 13251</strain>
    </source>
</reference>
<sequence>MSFTVLIPARLASTRLPDKPLADIAGKPMVVRVAERAALSGAERVMIATDDARVQQAAAAHGHAAILTRPDHPTGTDRLSEAVDALGLPDDAIVVNVQGDEPLIEPALIDAVAAQLVAAPHADIATCACPLADAEALFNPNVVKVVCTADRRALYFSRAPIPWARDALAGGARVLAPGLPAWHHIGIYAYRVAFLRRFPALSQGQLERYESLEQLRAMEHGHVIVVHHTDSAPAAGVDTPADLERARAAYTNRL</sequence>
<protein>
    <recommendedName>
        <fullName evidence="1">3-deoxy-manno-octulosonate cytidylyltransferase</fullName>
        <ecNumber evidence="1">2.7.7.38</ecNumber>
    </recommendedName>
    <alternativeName>
        <fullName evidence="1">CMP-2-keto-3-deoxyoctulosonic acid synthase</fullName>
        <shortName evidence="1">CKS</shortName>
        <shortName evidence="1">CMP-KDO synthase</shortName>
    </alternativeName>
</protein>
<evidence type="ECO:0000255" key="1">
    <source>
        <dbReference type="HAMAP-Rule" id="MF_00057"/>
    </source>
</evidence>